<organism>
    <name type="scientific">Polynucleobacter asymbioticus (strain DSM 18221 / CIP 109841 / QLW-P1DMWA-1)</name>
    <name type="common">Polynucleobacter necessarius subsp. asymbioticus</name>
    <dbReference type="NCBI Taxonomy" id="312153"/>
    <lineage>
        <taxon>Bacteria</taxon>
        <taxon>Pseudomonadati</taxon>
        <taxon>Pseudomonadota</taxon>
        <taxon>Betaproteobacteria</taxon>
        <taxon>Burkholderiales</taxon>
        <taxon>Burkholderiaceae</taxon>
        <taxon>Polynucleobacter</taxon>
    </lineage>
</organism>
<comment type="function">
    <text evidence="1">Specifically methylates the pseudouridine at position 1915 (m3Psi1915) in 23S rRNA.</text>
</comment>
<comment type="catalytic activity">
    <reaction evidence="1">
        <text>pseudouridine(1915) in 23S rRNA + S-adenosyl-L-methionine = N(3)-methylpseudouridine(1915) in 23S rRNA + S-adenosyl-L-homocysteine + H(+)</text>
        <dbReference type="Rhea" id="RHEA:42752"/>
        <dbReference type="Rhea" id="RHEA-COMP:10221"/>
        <dbReference type="Rhea" id="RHEA-COMP:10222"/>
        <dbReference type="ChEBI" id="CHEBI:15378"/>
        <dbReference type="ChEBI" id="CHEBI:57856"/>
        <dbReference type="ChEBI" id="CHEBI:59789"/>
        <dbReference type="ChEBI" id="CHEBI:65314"/>
        <dbReference type="ChEBI" id="CHEBI:74486"/>
        <dbReference type="EC" id="2.1.1.177"/>
    </reaction>
</comment>
<comment type="subunit">
    <text evidence="1">Homodimer.</text>
</comment>
<comment type="subcellular location">
    <subcellularLocation>
        <location evidence="1">Cytoplasm</location>
    </subcellularLocation>
</comment>
<comment type="similarity">
    <text evidence="1">Belongs to the RNA methyltransferase RlmH family.</text>
</comment>
<feature type="chain" id="PRO_1000082809" description="Ribosomal RNA large subunit methyltransferase H">
    <location>
        <begin position="1"/>
        <end position="147"/>
    </location>
</feature>
<feature type="binding site" evidence="1">
    <location>
        <position position="64"/>
    </location>
    <ligand>
        <name>S-adenosyl-L-methionine</name>
        <dbReference type="ChEBI" id="CHEBI:59789"/>
    </ligand>
</feature>
<feature type="binding site" evidence="1">
    <location>
        <position position="95"/>
    </location>
    <ligand>
        <name>S-adenosyl-L-methionine</name>
        <dbReference type="ChEBI" id="CHEBI:59789"/>
    </ligand>
</feature>
<feature type="binding site" evidence="1">
    <location>
        <begin position="114"/>
        <end position="119"/>
    </location>
    <ligand>
        <name>S-adenosyl-L-methionine</name>
        <dbReference type="ChEBI" id="CHEBI:59789"/>
    </ligand>
</feature>
<accession>A4SWG7</accession>
<evidence type="ECO:0000255" key="1">
    <source>
        <dbReference type="HAMAP-Rule" id="MF_00658"/>
    </source>
</evidence>
<keyword id="KW-0963">Cytoplasm</keyword>
<keyword id="KW-0489">Methyltransferase</keyword>
<keyword id="KW-1185">Reference proteome</keyword>
<keyword id="KW-0698">rRNA processing</keyword>
<keyword id="KW-0949">S-adenosyl-L-methionine</keyword>
<keyword id="KW-0808">Transferase</keyword>
<dbReference type="EC" id="2.1.1.177" evidence="1"/>
<dbReference type="EMBL" id="CP000655">
    <property type="protein sequence ID" value="ABP33831.1"/>
    <property type="molecule type" value="Genomic_DNA"/>
</dbReference>
<dbReference type="RefSeq" id="WP_011902456.1">
    <property type="nucleotide sequence ID" value="NC_009379.1"/>
</dbReference>
<dbReference type="SMR" id="A4SWG7"/>
<dbReference type="GeneID" id="31480970"/>
<dbReference type="KEGG" id="pnu:Pnuc_0613"/>
<dbReference type="eggNOG" id="COG1576">
    <property type="taxonomic scope" value="Bacteria"/>
</dbReference>
<dbReference type="HOGENOM" id="CLU_100552_1_0_4"/>
<dbReference type="Proteomes" id="UP000000231">
    <property type="component" value="Chromosome"/>
</dbReference>
<dbReference type="GO" id="GO:0005737">
    <property type="term" value="C:cytoplasm"/>
    <property type="evidence" value="ECO:0007669"/>
    <property type="project" value="UniProtKB-SubCell"/>
</dbReference>
<dbReference type="GO" id="GO:0070038">
    <property type="term" value="F:rRNA (pseudouridine-N3-)-methyltransferase activity"/>
    <property type="evidence" value="ECO:0007669"/>
    <property type="project" value="UniProtKB-UniRule"/>
</dbReference>
<dbReference type="CDD" id="cd18081">
    <property type="entry name" value="RlmH-like"/>
    <property type="match status" value="1"/>
</dbReference>
<dbReference type="Gene3D" id="3.40.1280.10">
    <property type="match status" value="1"/>
</dbReference>
<dbReference type="HAMAP" id="MF_00658">
    <property type="entry name" value="23SrRNA_methyltr_H"/>
    <property type="match status" value="1"/>
</dbReference>
<dbReference type="InterPro" id="IPR029028">
    <property type="entry name" value="Alpha/beta_knot_MTases"/>
</dbReference>
<dbReference type="InterPro" id="IPR003742">
    <property type="entry name" value="RlmH-like"/>
</dbReference>
<dbReference type="InterPro" id="IPR029026">
    <property type="entry name" value="tRNA_m1G_MTases_N"/>
</dbReference>
<dbReference type="NCBIfam" id="NF000986">
    <property type="entry name" value="PRK00103.1-4"/>
    <property type="match status" value="1"/>
</dbReference>
<dbReference type="PANTHER" id="PTHR33603">
    <property type="entry name" value="METHYLTRANSFERASE"/>
    <property type="match status" value="1"/>
</dbReference>
<dbReference type="PANTHER" id="PTHR33603:SF1">
    <property type="entry name" value="RIBOSOMAL RNA LARGE SUBUNIT METHYLTRANSFERASE H"/>
    <property type="match status" value="1"/>
</dbReference>
<dbReference type="Pfam" id="PF02590">
    <property type="entry name" value="SPOUT_MTase"/>
    <property type="match status" value="1"/>
</dbReference>
<dbReference type="PIRSF" id="PIRSF004505">
    <property type="entry name" value="MT_bac"/>
    <property type="match status" value="1"/>
</dbReference>
<dbReference type="SUPFAM" id="SSF75217">
    <property type="entry name" value="alpha/beta knot"/>
    <property type="match status" value="1"/>
</dbReference>
<protein>
    <recommendedName>
        <fullName evidence="1">Ribosomal RNA large subunit methyltransferase H</fullName>
        <ecNumber evidence="1">2.1.1.177</ecNumber>
    </recommendedName>
    <alternativeName>
        <fullName evidence="1">23S rRNA (pseudouridine1915-N3)-methyltransferase</fullName>
    </alternativeName>
    <alternativeName>
        <fullName evidence="1">23S rRNA m3Psi1915 methyltransferase</fullName>
    </alternativeName>
    <alternativeName>
        <fullName evidence="1">rRNA (pseudouridine-N3-)-methyltransferase RlmH</fullName>
    </alternativeName>
</protein>
<name>RLMH_POLAQ</name>
<reference key="1">
    <citation type="journal article" date="2012" name="Stand. Genomic Sci.">
        <title>Complete genome sequence of Polynucleobacter necessarius subsp. asymbioticus type strain (QLW-P1DMWA-1(T)).</title>
        <authorList>
            <person name="Meincke L."/>
            <person name="Copeland A."/>
            <person name="Lapidus A."/>
            <person name="Lucas S."/>
            <person name="Berry K.W."/>
            <person name="Del Rio T.G."/>
            <person name="Hammon N."/>
            <person name="Dalin E."/>
            <person name="Tice H."/>
            <person name="Pitluck S."/>
            <person name="Richardson P."/>
            <person name="Bruce D."/>
            <person name="Goodwin L."/>
            <person name="Han C."/>
            <person name="Tapia R."/>
            <person name="Detter J.C."/>
            <person name="Schmutz J."/>
            <person name="Brettin T."/>
            <person name="Larimer F."/>
            <person name="Land M."/>
            <person name="Hauser L."/>
            <person name="Kyrpides N.C."/>
            <person name="Ivanova N."/>
            <person name="Goker M."/>
            <person name="Woyke T."/>
            <person name="Wu Q.L."/>
            <person name="Pockl M."/>
            <person name="Hahn M.W."/>
            <person name="Klenk H.P."/>
        </authorList>
    </citation>
    <scope>NUCLEOTIDE SEQUENCE [LARGE SCALE GENOMIC DNA]</scope>
    <source>
        <strain>DSM 18221 / CIP 109841 / QLW-P1DMWA-1</strain>
    </source>
</reference>
<gene>
    <name evidence="1" type="primary">rlmH</name>
    <name type="ordered locus">Pnuc_0613</name>
</gene>
<proteinExistence type="inferred from homology"/>
<sequence length="147" mass="16408">MRLTIVSVGHKMPDWVATATHDYIKRMPADCSIEIKEIKPDLTPAKEAVKIAAAIPKGSRVIALDERGKDQTTQHLATQLAGWRQEGFDITFLIGGADGLDPSLKTNAQAMWRLSSLTLPHAMARVLLVEQLYRAWTILQGHPYHRE</sequence>